<dbReference type="EMBL" id="CP000099">
    <property type="protein sequence ID" value="AAZ72577.1"/>
    <property type="molecule type" value="Genomic_DNA"/>
</dbReference>
<dbReference type="SMR" id="Q464W5"/>
<dbReference type="STRING" id="269797.Mbar_A3714"/>
<dbReference type="PaxDb" id="269797-Mbar_A3714"/>
<dbReference type="KEGG" id="mba:Mbar_A3714"/>
<dbReference type="eggNOG" id="arCOG04701">
    <property type="taxonomic scope" value="Archaea"/>
</dbReference>
<dbReference type="HOGENOM" id="CLU_114342_3_2_2"/>
<dbReference type="OrthoDB" id="253428at2157"/>
<dbReference type="GO" id="GO:0005886">
    <property type="term" value="C:plasma membrane"/>
    <property type="evidence" value="ECO:0007669"/>
    <property type="project" value="UniProtKB-SubCell"/>
</dbReference>
<dbReference type="GO" id="GO:0062054">
    <property type="term" value="F:fluoride channel activity"/>
    <property type="evidence" value="ECO:0007669"/>
    <property type="project" value="UniProtKB-UniRule"/>
</dbReference>
<dbReference type="GO" id="GO:0046872">
    <property type="term" value="F:metal ion binding"/>
    <property type="evidence" value="ECO:0007669"/>
    <property type="project" value="UniProtKB-KW"/>
</dbReference>
<dbReference type="GO" id="GO:0140114">
    <property type="term" value="P:cellular detoxification of fluoride"/>
    <property type="evidence" value="ECO:0007669"/>
    <property type="project" value="UniProtKB-UniRule"/>
</dbReference>
<dbReference type="HAMAP" id="MF_00454">
    <property type="entry name" value="FluC"/>
    <property type="match status" value="1"/>
</dbReference>
<dbReference type="InterPro" id="IPR003691">
    <property type="entry name" value="FluC"/>
</dbReference>
<dbReference type="NCBIfam" id="TIGR00494">
    <property type="entry name" value="crcB"/>
    <property type="match status" value="1"/>
</dbReference>
<dbReference type="PANTHER" id="PTHR28259">
    <property type="entry name" value="FLUORIDE EXPORT PROTEIN 1-RELATED"/>
    <property type="match status" value="1"/>
</dbReference>
<dbReference type="PANTHER" id="PTHR28259:SF1">
    <property type="entry name" value="FLUORIDE EXPORT PROTEIN 1-RELATED"/>
    <property type="match status" value="1"/>
</dbReference>
<dbReference type="Pfam" id="PF02537">
    <property type="entry name" value="CRCB"/>
    <property type="match status" value="1"/>
</dbReference>
<gene>
    <name evidence="1" type="primary">fluC3</name>
    <name evidence="1" type="synonym">crcB3</name>
    <name type="ordered locus">Mbar_A3714</name>
</gene>
<name>FLUC3_METBF</name>
<comment type="function">
    <text evidence="1">Fluoride-specific ion channel. Important for reducing fluoride concentration in the cell, thus reducing its toxicity.</text>
</comment>
<comment type="catalytic activity">
    <reaction evidence="1">
        <text>fluoride(in) = fluoride(out)</text>
        <dbReference type="Rhea" id="RHEA:76159"/>
        <dbReference type="ChEBI" id="CHEBI:17051"/>
    </reaction>
    <physiologicalReaction direction="left-to-right" evidence="1">
        <dbReference type="Rhea" id="RHEA:76160"/>
    </physiologicalReaction>
</comment>
<comment type="activity regulation">
    <text evidence="1">Na(+) is not transported, but it plays an essential structural role and its presence is essential for fluoride channel function.</text>
</comment>
<comment type="subcellular location">
    <subcellularLocation>
        <location evidence="1">Cell membrane</location>
        <topology evidence="1">Multi-pass membrane protein</topology>
    </subcellularLocation>
</comment>
<comment type="similarity">
    <text evidence="1">Belongs to the fluoride channel Fluc/FEX (TC 1.A.43) family.</text>
</comment>
<feature type="chain" id="PRO_0000252964" description="Fluoride-specific ion channel FluC 3">
    <location>
        <begin position="1"/>
        <end position="132"/>
    </location>
</feature>
<feature type="transmembrane region" description="Helical" evidence="1">
    <location>
        <begin position="4"/>
        <end position="24"/>
    </location>
</feature>
<feature type="transmembrane region" description="Helical" evidence="1">
    <location>
        <begin position="32"/>
        <end position="52"/>
    </location>
</feature>
<feature type="transmembrane region" description="Helical" evidence="1">
    <location>
        <begin position="66"/>
        <end position="86"/>
    </location>
</feature>
<feature type="transmembrane region" description="Helical" evidence="1">
    <location>
        <begin position="95"/>
        <end position="115"/>
    </location>
</feature>
<feature type="binding site" evidence="1">
    <location>
        <position position="74"/>
    </location>
    <ligand>
        <name>Na(+)</name>
        <dbReference type="ChEBI" id="CHEBI:29101"/>
        <note>structural</note>
    </ligand>
</feature>
<feature type="binding site" evidence="1">
    <location>
        <position position="77"/>
    </location>
    <ligand>
        <name>Na(+)</name>
        <dbReference type="ChEBI" id="CHEBI:29101"/>
        <note>structural</note>
    </ligand>
</feature>
<proteinExistence type="inferred from homology"/>
<organism>
    <name type="scientific">Methanosarcina barkeri (strain Fusaro / DSM 804)</name>
    <dbReference type="NCBI Taxonomy" id="269797"/>
    <lineage>
        <taxon>Archaea</taxon>
        <taxon>Methanobacteriati</taxon>
        <taxon>Methanobacteriota</taxon>
        <taxon>Stenosarchaea group</taxon>
        <taxon>Methanomicrobia</taxon>
        <taxon>Methanosarcinales</taxon>
        <taxon>Methanosarcinaceae</taxon>
        <taxon>Methanosarcina</taxon>
    </lineage>
</organism>
<evidence type="ECO:0000255" key="1">
    <source>
        <dbReference type="HAMAP-Rule" id="MF_00454"/>
    </source>
</evidence>
<sequence length="132" mass="14471">MYTILLVGIGGFIGATLRYVFGGWIQNSFVNFPVGTLTINTIGSFFLGLIMYFSEYQGLFSDQTRIFLTIGILGAFTTLSTFGYESFRLLDDSKLMLMSINVVSTVLFSMMAVYLGKTVALGVSSYLLGGMK</sequence>
<reference key="1">
    <citation type="journal article" date="2006" name="J. Bacteriol.">
        <title>The Methanosarcina barkeri genome: comparative analysis with Methanosarcina acetivorans and Methanosarcina mazei reveals extensive rearrangement within methanosarcinal genomes.</title>
        <authorList>
            <person name="Maeder D.L."/>
            <person name="Anderson I."/>
            <person name="Brettin T.S."/>
            <person name="Bruce D.C."/>
            <person name="Gilna P."/>
            <person name="Han C.S."/>
            <person name="Lapidus A."/>
            <person name="Metcalf W.W."/>
            <person name="Saunders E."/>
            <person name="Tapia R."/>
            <person name="Sowers K.R."/>
        </authorList>
    </citation>
    <scope>NUCLEOTIDE SEQUENCE [LARGE SCALE GENOMIC DNA]</scope>
    <source>
        <strain>Fusaro / DSM 804</strain>
    </source>
</reference>
<protein>
    <recommendedName>
        <fullName evidence="1">Fluoride-specific ion channel FluC 3</fullName>
    </recommendedName>
</protein>
<keyword id="KW-1003">Cell membrane</keyword>
<keyword id="KW-0407">Ion channel</keyword>
<keyword id="KW-0406">Ion transport</keyword>
<keyword id="KW-0472">Membrane</keyword>
<keyword id="KW-0479">Metal-binding</keyword>
<keyword id="KW-0915">Sodium</keyword>
<keyword id="KW-0812">Transmembrane</keyword>
<keyword id="KW-1133">Transmembrane helix</keyword>
<keyword id="KW-0813">Transport</keyword>
<accession>Q464W5</accession>